<organism>
    <name type="scientific">Mus musculus</name>
    <name type="common">Mouse</name>
    <dbReference type="NCBI Taxonomy" id="10090"/>
    <lineage>
        <taxon>Eukaryota</taxon>
        <taxon>Metazoa</taxon>
        <taxon>Chordata</taxon>
        <taxon>Craniata</taxon>
        <taxon>Vertebrata</taxon>
        <taxon>Euteleostomi</taxon>
        <taxon>Mammalia</taxon>
        <taxon>Eutheria</taxon>
        <taxon>Euarchontoglires</taxon>
        <taxon>Glires</taxon>
        <taxon>Rodentia</taxon>
        <taxon>Myomorpha</taxon>
        <taxon>Muroidea</taxon>
        <taxon>Muridae</taxon>
        <taxon>Murinae</taxon>
        <taxon>Mus</taxon>
        <taxon>Mus</taxon>
    </lineage>
</organism>
<evidence type="ECO:0000250" key="1">
    <source>
        <dbReference type="UniProtKB" id="P43897"/>
    </source>
</evidence>
<evidence type="ECO:0000255" key="2">
    <source>
        <dbReference type="HAMAP-Rule" id="MF_03135"/>
    </source>
</evidence>
<evidence type="ECO:0007744" key="3">
    <source>
    </source>
</evidence>
<name>EFTS_MOUSE</name>
<feature type="transit peptide" description="Mitochondrion" evidence="2">
    <location>
        <begin position="1"/>
        <end position="44"/>
    </location>
</feature>
<feature type="chain" id="PRO_0000007469" description="Elongation factor Ts, mitochondrial">
    <location>
        <begin position="45"/>
        <end position="324"/>
    </location>
</feature>
<feature type="modified residue" description="N6-succinyllysine" evidence="3">
    <location>
        <position position="75"/>
    </location>
</feature>
<feature type="modified residue" description="N6-succinyllysine" evidence="3">
    <location>
        <position position="132"/>
    </location>
</feature>
<feature type="modified residue" description="N6-succinyllysine" evidence="3">
    <location>
        <position position="191"/>
    </location>
</feature>
<feature type="modified residue" description="Phosphoserine" evidence="1">
    <location>
        <position position="269"/>
    </location>
</feature>
<dbReference type="EMBL" id="AK012240">
    <property type="protein sequence ID" value="BAB28113.1"/>
    <property type="molecule type" value="mRNA"/>
</dbReference>
<dbReference type="EMBL" id="AK169164">
    <property type="protein sequence ID" value="BAE40943.1"/>
    <property type="molecule type" value="mRNA"/>
</dbReference>
<dbReference type="EMBL" id="BC057904">
    <property type="protein sequence ID" value="AAH57904.1"/>
    <property type="molecule type" value="mRNA"/>
</dbReference>
<dbReference type="CCDS" id="CCDS24222.1"/>
<dbReference type="RefSeq" id="NP_079813.1">
    <property type="nucleotide sequence ID" value="NM_025537.3"/>
</dbReference>
<dbReference type="SMR" id="Q9CZR8"/>
<dbReference type="BioGRID" id="211443">
    <property type="interactions" value="8"/>
</dbReference>
<dbReference type="FunCoup" id="Q9CZR8">
    <property type="interactions" value="3454"/>
</dbReference>
<dbReference type="IntAct" id="Q9CZR8">
    <property type="interactions" value="1"/>
</dbReference>
<dbReference type="MINT" id="Q9CZR8"/>
<dbReference type="STRING" id="10090.ENSMUSP00000042134"/>
<dbReference type="GlyGen" id="Q9CZR8">
    <property type="glycosylation" value="1 site, 1 O-linked glycan (1 site)"/>
</dbReference>
<dbReference type="iPTMnet" id="Q9CZR8"/>
<dbReference type="PhosphoSitePlus" id="Q9CZR8"/>
<dbReference type="SwissPalm" id="Q9CZR8"/>
<dbReference type="jPOST" id="Q9CZR8"/>
<dbReference type="PaxDb" id="10090-ENSMUSP00000042134"/>
<dbReference type="ProteomicsDB" id="275593"/>
<dbReference type="Pumba" id="Q9CZR8"/>
<dbReference type="Antibodypedia" id="1781">
    <property type="antibodies" value="158 antibodies from 27 providers"/>
</dbReference>
<dbReference type="DNASU" id="66399"/>
<dbReference type="Ensembl" id="ENSMUST00000040560.11">
    <property type="protein sequence ID" value="ENSMUSP00000042134.5"/>
    <property type="gene ID" value="ENSMUSG00000040521.12"/>
</dbReference>
<dbReference type="GeneID" id="66399"/>
<dbReference type="KEGG" id="mmu:66399"/>
<dbReference type="UCSC" id="uc007hhm.1">
    <property type="organism name" value="mouse"/>
</dbReference>
<dbReference type="AGR" id="MGI:1913649"/>
<dbReference type="CTD" id="10102"/>
<dbReference type="MGI" id="MGI:1913649">
    <property type="gene designation" value="Tsfm"/>
</dbReference>
<dbReference type="VEuPathDB" id="HostDB:ENSMUSG00000040521"/>
<dbReference type="eggNOG" id="KOG1071">
    <property type="taxonomic scope" value="Eukaryota"/>
</dbReference>
<dbReference type="GeneTree" id="ENSGT00390000016293"/>
<dbReference type="HOGENOM" id="CLU_047155_4_0_1"/>
<dbReference type="InParanoid" id="Q9CZR8"/>
<dbReference type="OMA" id="QEYMLDD"/>
<dbReference type="OrthoDB" id="277235at2759"/>
<dbReference type="PhylomeDB" id="Q9CZR8"/>
<dbReference type="TreeFam" id="TF314154"/>
<dbReference type="BioGRID-ORCS" id="66399">
    <property type="hits" value="26 hits in 81 CRISPR screens"/>
</dbReference>
<dbReference type="ChiTaRS" id="Tsfm">
    <property type="organism name" value="mouse"/>
</dbReference>
<dbReference type="PRO" id="PR:Q9CZR8"/>
<dbReference type="Proteomes" id="UP000000589">
    <property type="component" value="Chromosome 10"/>
</dbReference>
<dbReference type="RNAct" id="Q9CZR8">
    <property type="molecule type" value="protein"/>
</dbReference>
<dbReference type="Bgee" id="ENSMUSG00000040521">
    <property type="expression patterns" value="Expressed in right kidney and 243 other cell types or tissues"/>
</dbReference>
<dbReference type="ExpressionAtlas" id="Q9CZR8">
    <property type="expression patterns" value="baseline and differential"/>
</dbReference>
<dbReference type="GO" id="GO:0005739">
    <property type="term" value="C:mitochondrion"/>
    <property type="evidence" value="ECO:0007005"/>
    <property type="project" value="MGI"/>
</dbReference>
<dbReference type="GO" id="GO:0005654">
    <property type="term" value="C:nucleoplasm"/>
    <property type="evidence" value="ECO:0007669"/>
    <property type="project" value="Ensembl"/>
</dbReference>
<dbReference type="GO" id="GO:0003746">
    <property type="term" value="F:translation elongation factor activity"/>
    <property type="evidence" value="ECO:0007669"/>
    <property type="project" value="UniProtKB-UniRule"/>
</dbReference>
<dbReference type="GO" id="GO:0070129">
    <property type="term" value="P:regulation of mitochondrial translation"/>
    <property type="evidence" value="ECO:0000250"/>
    <property type="project" value="UniProtKB"/>
</dbReference>
<dbReference type="CDD" id="cd14275">
    <property type="entry name" value="UBA_EF-Ts"/>
    <property type="match status" value="1"/>
</dbReference>
<dbReference type="FunFam" id="1.10.8.10:FF:000031">
    <property type="entry name" value="Elongation factor Ts, mitochondrial"/>
    <property type="match status" value="1"/>
</dbReference>
<dbReference type="FunFam" id="3.30.479.20:FF:000007">
    <property type="entry name" value="Elongation factor Ts, mitochondrial"/>
    <property type="match status" value="1"/>
</dbReference>
<dbReference type="FunFam" id="3.30.479.20:FF:000008">
    <property type="entry name" value="Elongation factor Ts, mitochondrial"/>
    <property type="match status" value="1"/>
</dbReference>
<dbReference type="Gene3D" id="1.10.8.10">
    <property type="entry name" value="DNA helicase RuvA subunit, C-terminal domain"/>
    <property type="match status" value="1"/>
</dbReference>
<dbReference type="Gene3D" id="3.30.479.20">
    <property type="entry name" value="Elongation factor Ts, dimerisation domain"/>
    <property type="match status" value="2"/>
</dbReference>
<dbReference type="HAMAP" id="MF_00050">
    <property type="entry name" value="EF_Ts"/>
    <property type="match status" value="1"/>
</dbReference>
<dbReference type="InterPro" id="IPR036402">
    <property type="entry name" value="EF-Ts_dimer_sf"/>
</dbReference>
<dbReference type="InterPro" id="IPR001816">
    <property type="entry name" value="Transl_elong_EFTs/EF1B"/>
</dbReference>
<dbReference type="InterPro" id="IPR014039">
    <property type="entry name" value="Transl_elong_EFTs/EF1B_dimer"/>
</dbReference>
<dbReference type="InterPro" id="IPR018101">
    <property type="entry name" value="Transl_elong_Ts_CS"/>
</dbReference>
<dbReference type="InterPro" id="IPR009060">
    <property type="entry name" value="UBA-like_sf"/>
</dbReference>
<dbReference type="PANTHER" id="PTHR11741">
    <property type="entry name" value="ELONGATION FACTOR TS"/>
    <property type="match status" value="1"/>
</dbReference>
<dbReference type="PANTHER" id="PTHR11741:SF0">
    <property type="entry name" value="ELONGATION FACTOR TS, MITOCHONDRIAL"/>
    <property type="match status" value="1"/>
</dbReference>
<dbReference type="Pfam" id="PF25025">
    <property type="entry name" value="EF-Ts_N"/>
    <property type="match status" value="1"/>
</dbReference>
<dbReference type="Pfam" id="PF00889">
    <property type="entry name" value="EF_TS"/>
    <property type="match status" value="1"/>
</dbReference>
<dbReference type="SUPFAM" id="SSF54713">
    <property type="entry name" value="Elongation factor Ts (EF-Ts), dimerisation domain"/>
    <property type="match status" value="2"/>
</dbReference>
<dbReference type="SUPFAM" id="SSF46934">
    <property type="entry name" value="UBA-like"/>
    <property type="match status" value="1"/>
</dbReference>
<dbReference type="PROSITE" id="PS01126">
    <property type="entry name" value="EF_TS_1"/>
    <property type="match status" value="1"/>
</dbReference>
<dbReference type="PROSITE" id="PS01127">
    <property type="entry name" value="EF_TS_2"/>
    <property type="match status" value="1"/>
</dbReference>
<accession>Q9CZR8</accession>
<accession>Q3TFF5</accession>
<gene>
    <name type="primary">Tsfm</name>
</gene>
<proteinExistence type="evidence at protein level"/>
<keyword id="KW-0251">Elongation factor</keyword>
<keyword id="KW-0496">Mitochondrion</keyword>
<keyword id="KW-0597">Phosphoprotein</keyword>
<keyword id="KW-0648">Protein biosynthesis</keyword>
<keyword id="KW-1185">Reference proteome</keyword>
<keyword id="KW-0809">Transit peptide</keyword>
<protein>
    <recommendedName>
        <fullName evidence="2">Elongation factor Ts, mitochondrial</fullName>
        <shortName evidence="2">EF-Ts</shortName>
        <shortName evidence="2">EF-TsMt</shortName>
    </recommendedName>
</protein>
<comment type="function">
    <text evidence="2">Associates with the EF-Tu.GDP complex and induces the exchange of GDP to GTP. It remains bound to the aminoacyl-tRNA.EF-Tu.GTP complex up to the GTP hydrolysis stage on the ribosome.</text>
</comment>
<comment type="subcellular location">
    <subcellularLocation>
        <location evidence="2">Mitochondrion</location>
    </subcellularLocation>
</comment>
<comment type="similarity">
    <text evidence="2">Belongs to the EF-Ts family.</text>
</comment>
<sequence>MSLLRSLRFFPVACTGRSARAVLLQPSQPWLTFHAGPSLSSAASSKELLMKLRRKTGYSFVNCKKALETCGGDLKQAEDWLHKQAQKEGWSKAAKLHGRKTKEGLIGLLQEGNTAVLVEVNCETDFVSRNLKFQQLVQQVALGTMAHCQNLTDRLSTYSKGFLNSSELSELAAGPDREGSLKDQLALAIGKLGENMILKRAAWVKVPSGFYVGSYVHGVTQSPSLQNLVLGKYGALVICETPEQIANLEEVGRRLGQHVVGMAPLSVGSLDDEPGGETETRMLPQPYLLDPSITLGQYVQPQGVTVVDFVRFECGEDEQVAEAE</sequence>
<reference key="1">
    <citation type="journal article" date="2005" name="Science">
        <title>The transcriptional landscape of the mammalian genome.</title>
        <authorList>
            <person name="Carninci P."/>
            <person name="Kasukawa T."/>
            <person name="Katayama S."/>
            <person name="Gough J."/>
            <person name="Frith M.C."/>
            <person name="Maeda N."/>
            <person name="Oyama R."/>
            <person name="Ravasi T."/>
            <person name="Lenhard B."/>
            <person name="Wells C."/>
            <person name="Kodzius R."/>
            <person name="Shimokawa K."/>
            <person name="Bajic V.B."/>
            <person name="Brenner S.E."/>
            <person name="Batalov S."/>
            <person name="Forrest A.R."/>
            <person name="Zavolan M."/>
            <person name="Davis M.J."/>
            <person name="Wilming L.G."/>
            <person name="Aidinis V."/>
            <person name="Allen J.E."/>
            <person name="Ambesi-Impiombato A."/>
            <person name="Apweiler R."/>
            <person name="Aturaliya R.N."/>
            <person name="Bailey T.L."/>
            <person name="Bansal M."/>
            <person name="Baxter L."/>
            <person name="Beisel K.W."/>
            <person name="Bersano T."/>
            <person name="Bono H."/>
            <person name="Chalk A.M."/>
            <person name="Chiu K.P."/>
            <person name="Choudhary V."/>
            <person name="Christoffels A."/>
            <person name="Clutterbuck D.R."/>
            <person name="Crowe M.L."/>
            <person name="Dalla E."/>
            <person name="Dalrymple B.P."/>
            <person name="de Bono B."/>
            <person name="Della Gatta G."/>
            <person name="di Bernardo D."/>
            <person name="Down T."/>
            <person name="Engstrom P."/>
            <person name="Fagiolini M."/>
            <person name="Faulkner G."/>
            <person name="Fletcher C.F."/>
            <person name="Fukushima T."/>
            <person name="Furuno M."/>
            <person name="Futaki S."/>
            <person name="Gariboldi M."/>
            <person name="Georgii-Hemming P."/>
            <person name="Gingeras T.R."/>
            <person name="Gojobori T."/>
            <person name="Green R.E."/>
            <person name="Gustincich S."/>
            <person name="Harbers M."/>
            <person name="Hayashi Y."/>
            <person name="Hensch T.K."/>
            <person name="Hirokawa N."/>
            <person name="Hill D."/>
            <person name="Huminiecki L."/>
            <person name="Iacono M."/>
            <person name="Ikeo K."/>
            <person name="Iwama A."/>
            <person name="Ishikawa T."/>
            <person name="Jakt M."/>
            <person name="Kanapin A."/>
            <person name="Katoh M."/>
            <person name="Kawasawa Y."/>
            <person name="Kelso J."/>
            <person name="Kitamura H."/>
            <person name="Kitano H."/>
            <person name="Kollias G."/>
            <person name="Krishnan S.P."/>
            <person name="Kruger A."/>
            <person name="Kummerfeld S.K."/>
            <person name="Kurochkin I.V."/>
            <person name="Lareau L.F."/>
            <person name="Lazarevic D."/>
            <person name="Lipovich L."/>
            <person name="Liu J."/>
            <person name="Liuni S."/>
            <person name="McWilliam S."/>
            <person name="Madan Babu M."/>
            <person name="Madera M."/>
            <person name="Marchionni L."/>
            <person name="Matsuda H."/>
            <person name="Matsuzawa S."/>
            <person name="Miki H."/>
            <person name="Mignone F."/>
            <person name="Miyake S."/>
            <person name="Morris K."/>
            <person name="Mottagui-Tabar S."/>
            <person name="Mulder N."/>
            <person name="Nakano N."/>
            <person name="Nakauchi H."/>
            <person name="Ng P."/>
            <person name="Nilsson R."/>
            <person name="Nishiguchi S."/>
            <person name="Nishikawa S."/>
            <person name="Nori F."/>
            <person name="Ohara O."/>
            <person name="Okazaki Y."/>
            <person name="Orlando V."/>
            <person name="Pang K.C."/>
            <person name="Pavan W.J."/>
            <person name="Pavesi G."/>
            <person name="Pesole G."/>
            <person name="Petrovsky N."/>
            <person name="Piazza S."/>
            <person name="Reed J."/>
            <person name="Reid J.F."/>
            <person name="Ring B.Z."/>
            <person name="Ringwald M."/>
            <person name="Rost B."/>
            <person name="Ruan Y."/>
            <person name="Salzberg S.L."/>
            <person name="Sandelin A."/>
            <person name="Schneider C."/>
            <person name="Schoenbach C."/>
            <person name="Sekiguchi K."/>
            <person name="Semple C.A."/>
            <person name="Seno S."/>
            <person name="Sessa L."/>
            <person name="Sheng Y."/>
            <person name="Shibata Y."/>
            <person name="Shimada H."/>
            <person name="Shimada K."/>
            <person name="Silva D."/>
            <person name="Sinclair B."/>
            <person name="Sperling S."/>
            <person name="Stupka E."/>
            <person name="Sugiura K."/>
            <person name="Sultana R."/>
            <person name="Takenaka Y."/>
            <person name="Taki K."/>
            <person name="Tammoja K."/>
            <person name="Tan S.L."/>
            <person name="Tang S."/>
            <person name="Taylor M.S."/>
            <person name="Tegner J."/>
            <person name="Teichmann S.A."/>
            <person name="Ueda H.R."/>
            <person name="van Nimwegen E."/>
            <person name="Verardo R."/>
            <person name="Wei C.L."/>
            <person name="Yagi K."/>
            <person name="Yamanishi H."/>
            <person name="Zabarovsky E."/>
            <person name="Zhu S."/>
            <person name="Zimmer A."/>
            <person name="Hide W."/>
            <person name="Bult C."/>
            <person name="Grimmond S.M."/>
            <person name="Teasdale R.D."/>
            <person name="Liu E.T."/>
            <person name="Brusic V."/>
            <person name="Quackenbush J."/>
            <person name="Wahlestedt C."/>
            <person name="Mattick J.S."/>
            <person name="Hume D.A."/>
            <person name="Kai C."/>
            <person name="Sasaki D."/>
            <person name="Tomaru Y."/>
            <person name="Fukuda S."/>
            <person name="Kanamori-Katayama M."/>
            <person name="Suzuki M."/>
            <person name="Aoki J."/>
            <person name="Arakawa T."/>
            <person name="Iida J."/>
            <person name="Imamura K."/>
            <person name="Itoh M."/>
            <person name="Kato T."/>
            <person name="Kawaji H."/>
            <person name="Kawagashira N."/>
            <person name="Kawashima T."/>
            <person name="Kojima M."/>
            <person name="Kondo S."/>
            <person name="Konno H."/>
            <person name="Nakano K."/>
            <person name="Ninomiya N."/>
            <person name="Nishio T."/>
            <person name="Okada M."/>
            <person name="Plessy C."/>
            <person name="Shibata K."/>
            <person name="Shiraki T."/>
            <person name="Suzuki S."/>
            <person name="Tagami M."/>
            <person name="Waki K."/>
            <person name="Watahiki A."/>
            <person name="Okamura-Oho Y."/>
            <person name="Suzuki H."/>
            <person name="Kawai J."/>
            <person name="Hayashizaki Y."/>
        </authorList>
    </citation>
    <scope>NUCLEOTIDE SEQUENCE [LARGE SCALE MRNA]</scope>
    <source>
        <strain>C57BL/6J</strain>
        <tissue>Embryo</tissue>
        <tissue>Heart</tissue>
    </source>
</reference>
<reference key="2">
    <citation type="journal article" date="2004" name="Genome Res.">
        <title>The status, quality, and expansion of the NIH full-length cDNA project: the Mammalian Gene Collection (MGC).</title>
        <authorList>
            <consortium name="The MGC Project Team"/>
        </authorList>
    </citation>
    <scope>NUCLEOTIDE SEQUENCE [LARGE SCALE MRNA]</scope>
    <source>
        <strain>Czech II</strain>
        <tissue>Mammary gland</tissue>
    </source>
</reference>
<reference key="3">
    <citation type="journal article" date="2010" name="Cell">
        <title>A tissue-specific atlas of mouse protein phosphorylation and expression.</title>
        <authorList>
            <person name="Huttlin E.L."/>
            <person name="Jedrychowski M.P."/>
            <person name="Elias J.E."/>
            <person name="Goswami T."/>
            <person name="Rad R."/>
            <person name="Beausoleil S.A."/>
            <person name="Villen J."/>
            <person name="Haas W."/>
            <person name="Sowa M.E."/>
            <person name="Gygi S.P."/>
        </authorList>
    </citation>
    <scope>IDENTIFICATION BY MASS SPECTROMETRY [LARGE SCALE ANALYSIS]</scope>
    <source>
        <tissue>Brain</tissue>
        <tissue>Brown adipose tissue</tissue>
        <tissue>Heart</tissue>
        <tissue>Kidney</tissue>
        <tissue>Liver</tissue>
        <tissue>Lung</tissue>
        <tissue>Pancreas</tissue>
        <tissue>Spleen</tissue>
        <tissue>Testis</tissue>
    </source>
</reference>
<reference key="4">
    <citation type="journal article" date="2013" name="Mol. Cell">
        <title>SIRT5-mediated lysine desuccinylation impacts diverse metabolic pathways.</title>
        <authorList>
            <person name="Park J."/>
            <person name="Chen Y."/>
            <person name="Tishkoff D.X."/>
            <person name="Peng C."/>
            <person name="Tan M."/>
            <person name="Dai L."/>
            <person name="Xie Z."/>
            <person name="Zhang Y."/>
            <person name="Zwaans B.M."/>
            <person name="Skinner M.E."/>
            <person name="Lombard D.B."/>
            <person name="Zhao Y."/>
        </authorList>
    </citation>
    <scope>SUCCINYLATION [LARGE SCALE ANALYSIS] AT LYS-75; LYS-132 AND LYS-191</scope>
    <scope>IDENTIFICATION BY MASS SPECTROMETRY [LARGE SCALE ANALYSIS]</scope>
    <source>
        <tissue>Liver</tissue>
    </source>
</reference>